<gene>
    <name type="primary">Snx29</name>
</gene>
<comment type="alternative products">
    <event type="alternative splicing"/>
    <isoform>
        <id>Q9D3S3-1</id>
        <name>1</name>
        <sequence type="displayed"/>
    </isoform>
    <isoform>
        <id>Q9D3S3-3</id>
        <name>2</name>
        <sequence type="described" ref="VSP_041966"/>
    </isoform>
</comment>
<comment type="similarity">
    <text evidence="7">Belongs to the sorting nexin family.</text>
</comment>
<comment type="sequence caution" evidence="7">
    <conflict type="miscellaneous discrepancy">
        <sequence resource="EMBL-CDS" id="AAH34114"/>
    </conflict>
    <text>Probable cloning artifact.</text>
</comment>
<reference key="1">
    <citation type="submission" date="2001-07" db="EMBL/GenBank/DDBJ databases">
        <authorList>
            <person name="Hong W."/>
        </authorList>
    </citation>
    <scope>NUCLEOTIDE SEQUENCE [MRNA] (ISOFORM 2)</scope>
    <source>
        <strain>C57BL/6J</strain>
    </source>
</reference>
<reference key="2">
    <citation type="journal article" date="2005" name="Science">
        <title>The transcriptional landscape of the mammalian genome.</title>
        <authorList>
            <person name="Carninci P."/>
            <person name="Kasukawa T."/>
            <person name="Katayama S."/>
            <person name="Gough J."/>
            <person name="Frith M.C."/>
            <person name="Maeda N."/>
            <person name="Oyama R."/>
            <person name="Ravasi T."/>
            <person name="Lenhard B."/>
            <person name="Wells C."/>
            <person name="Kodzius R."/>
            <person name="Shimokawa K."/>
            <person name="Bajic V.B."/>
            <person name="Brenner S.E."/>
            <person name="Batalov S."/>
            <person name="Forrest A.R."/>
            <person name="Zavolan M."/>
            <person name="Davis M.J."/>
            <person name="Wilming L.G."/>
            <person name="Aidinis V."/>
            <person name="Allen J.E."/>
            <person name="Ambesi-Impiombato A."/>
            <person name="Apweiler R."/>
            <person name="Aturaliya R.N."/>
            <person name="Bailey T.L."/>
            <person name="Bansal M."/>
            <person name="Baxter L."/>
            <person name="Beisel K.W."/>
            <person name="Bersano T."/>
            <person name="Bono H."/>
            <person name="Chalk A.M."/>
            <person name="Chiu K.P."/>
            <person name="Choudhary V."/>
            <person name="Christoffels A."/>
            <person name="Clutterbuck D.R."/>
            <person name="Crowe M.L."/>
            <person name="Dalla E."/>
            <person name="Dalrymple B.P."/>
            <person name="de Bono B."/>
            <person name="Della Gatta G."/>
            <person name="di Bernardo D."/>
            <person name="Down T."/>
            <person name="Engstrom P."/>
            <person name="Fagiolini M."/>
            <person name="Faulkner G."/>
            <person name="Fletcher C.F."/>
            <person name="Fukushima T."/>
            <person name="Furuno M."/>
            <person name="Futaki S."/>
            <person name="Gariboldi M."/>
            <person name="Georgii-Hemming P."/>
            <person name="Gingeras T.R."/>
            <person name="Gojobori T."/>
            <person name="Green R.E."/>
            <person name="Gustincich S."/>
            <person name="Harbers M."/>
            <person name="Hayashi Y."/>
            <person name="Hensch T.K."/>
            <person name="Hirokawa N."/>
            <person name="Hill D."/>
            <person name="Huminiecki L."/>
            <person name="Iacono M."/>
            <person name="Ikeo K."/>
            <person name="Iwama A."/>
            <person name="Ishikawa T."/>
            <person name="Jakt M."/>
            <person name="Kanapin A."/>
            <person name="Katoh M."/>
            <person name="Kawasawa Y."/>
            <person name="Kelso J."/>
            <person name="Kitamura H."/>
            <person name="Kitano H."/>
            <person name="Kollias G."/>
            <person name="Krishnan S.P."/>
            <person name="Kruger A."/>
            <person name="Kummerfeld S.K."/>
            <person name="Kurochkin I.V."/>
            <person name="Lareau L.F."/>
            <person name="Lazarevic D."/>
            <person name="Lipovich L."/>
            <person name="Liu J."/>
            <person name="Liuni S."/>
            <person name="McWilliam S."/>
            <person name="Madan Babu M."/>
            <person name="Madera M."/>
            <person name="Marchionni L."/>
            <person name="Matsuda H."/>
            <person name="Matsuzawa S."/>
            <person name="Miki H."/>
            <person name="Mignone F."/>
            <person name="Miyake S."/>
            <person name="Morris K."/>
            <person name="Mottagui-Tabar S."/>
            <person name="Mulder N."/>
            <person name="Nakano N."/>
            <person name="Nakauchi H."/>
            <person name="Ng P."/>
            <person name="Nilsson R."/>
            <person name="Nishiguchi S."/>
            <person name="Nishikawa S."/>
            <person name="Nori F."/>
            <person name="Ohara O."/>
            <person name="Okazaki Y."/>
            <person name="Orlando V."/>
            <person name="Pang K.C."/>
            <person name="Pavan W.J."/>
            <person name="Pavesi G."/>
            <person name="Pesole G."/>
            <person name="Petrovsky N."/>
            <person name="Piazza S."/>
            <person name="Reed J."/>
            <person name="Reid J.F."/>
            <person name="Ring B.Z."/>
            <person name="Ringwald M."/>
            <person name="Rost B."/>
            <person name="Ruan Y."/>
            <person name="Salzberg S.L."/>
            <person name="Sandelin A."/>
            <person name="Schneider C."/>
            <person name="Schoenbach C."/>
            <person name="Sekiguchi K."/>
            <person name="Semple C.A."/>
            <person name="Seno S."/>
            <person name="Sessa L."/>
            <person name="Sheng Y."/>
            <person name="Shibata Y."/>
            <person name="Shimada H."/>
            <person name="Shimada K."/>
            <person name="Silva D."/>
            <person name="Sinclair B."/>
            <person name="Sperling S."/>
            <person name="Stupka E."/>
            <person name="Sugiura K."/>
            <person name="Sultana R."/>
            <person name="Takenaka Y."/>
            <person name="Taki K."/>
            <person name="Tammoja K."/>
            <person name="Tan S.L."/>
            <person name="Tang S."/>
            <person name="Taylor M.S."/>
            <person name="Tegner J."/>
            <person name="Teichmann S.A."/>
            <person name="Ueda H.R."/>
            <person name="van Nimwegen E."/>
            <person name="Verardo R."/>
            <person name="Wei C.L."/>
            <person name="Yagi K."/>
            <person name="Yamanishi H."/>
            <person name="Zabarovsky E."/>
            <person name="Zhu S."/>
            <person name="Zimmer A."/>
            <person name="Hide W."/>
            <person name="Bult C."/>
            <person name="Grimmond S.M."/>
            <person name="Teasdale R.D."/>
            <person name="Liu E.T."/>
            <person name="Brusic V."/>
            <person name="Quackenbush J."/>
            <person name="Wahlestedt C."/>
            <person name="Mattick J.S."/>
            <person name="Hume D.A."/>
            <person name="Kai C."/>
            <person name="Sasaki D."/>
            <person name="Tomaru Y."/>
            <person name="Fukuda S."/>
            <person name="Kanamori-Katayama M."/>
            <person name="Suzuki M."/>
            <person name="Aoki J."/>
            <person name="Arakawa T."/>
            <person name="Iida J."/>
            <person name="Imamura K."/>
            <person name="Itoh M."/>
            <person name="Kato T."/>
            <person name="Kawaji H."/>
            <person name="Kawagashira N."/>
            <person name="Kawashima T."/>
            <person name="Kojima M."/>
            <person name="Kondo S."/>
            <person name="Konno H."/>
            <person name="Nakano K."/>
            <person name="Ninomiya N."/>
            <person name="Nishio T."/>
            <person name="Okada M."/>
            <person name="Plessy C."/>
            <person name="Shibata K."/>
            <person name="Shiraki T."/>
            <person name="Suzuki S."/>
            <person name="Tagami M."/>
            <person name="Waki K."/>
            <person name="Watahiki A."/>
            <person name="Okamura-Oho Y."/>
            <person name="Suzuki H."/>
            <person name="Kawai J."/>
            <person name="Hayashizaki Y."/>
        </authorList>
    </citation>
    <scope>NUCLEOTIDE SEQUENCE [LARGE SCALE MRNA] (ISOFORM 2)</scope>
    <source>
        <strain>C57BL/6J</strain>
        <tissue>Testis</tissue>
    </source>
</reference>
<reference key="3">
    <citation type="journal article" date="2009" name="PLoS Biol.">
        <title>Lineage-specific biology revealed by a finished genome assembly of the mouse.</title>
        <authorList>
            <person name="Church D.M."/>
            <person name="Goodstadt L."/>
            <person name="Hillier L.W."/>
            <person name="Zody M.C."/>
            <person name="Goldstein S."/>
            <person name="She X."/>
            <person name="Bult C.J."/>
            <person name="Agarwala R."/>
            <person name="Cherry J.L."/>
            <person name="DiCuccio M."/>
            <person name="Hlavina W."/>
            <person name="Kapustin Y."/>
            <person name="Meric P."/>
            <person name="Maglott D."/>
            <person name="Birtle Z."/>
            <person name="Marques A.C."/>
            <person name="Graves T."/>
            <person name="Zhou S."/>
            <person name="Teague B."/>
            <person name="Potamousis K."/>
            <person name="Churas C."/>
            <person name="Place M."/>
            <person name="Herschleb J."/>
            <person name="Runnheim R."/>
            <person name="Forrest D."/>
            <person name="Amos-Landgraf J."/>
            <person name="Schwartz D.C."/>
            <person name="Cheng Z."/>
            <person name="Lindblad-Toh K."/>
            <person name="Eichler E.E."/>
            <person name="Ponting C.P."/>
        </authorList>
    </citation>
    <scope>NUCLEOTIDE SEQUENCE [LARGE SCALE GENOMIC DNA]</scope>
    <source>
        <strain>C57BL/6J</strain>
    </source>
</reference>
<reference key="4">
    <citation type="journal article" date="2004" name="Genome Res.">
        <title>The status, quality, and expansion of the NIH full-length cDNA project: the Mammalian Gene Collection (MGC).</title>
        <authorList>
            <consortium name="The MGC Project Team"/>
        </authorList>
    </citation>
    <scope>NUCLEOTIDE SEQUENCE [LARGE SCALE MRNA] OF 445-682 (ISOFORM 1)</scope>
    <source>
        <tissue>Eye</tissue>
    </source>
</reference>
<reference key="5">
    <citation type="journal article" date="2007" name="Proc. Natl. Acad. Sci. U.S.A.">
        <title>Large-scale phosphorylation analysis of mouse liver.</title>
        <authorList>
            <person name="Villen J."/>
            <person name="Beausoleil S.A."/>
            <person name="Gerber S.A."/>
            <person name="Gygi S.P."/>
        </authorList>
    </citation>
    <scope>PHOSPHORYLATION [LARGE SCALE ANALYSIS] AT SER-344</scope>
    <scope>IDENTIFICATION BY MASS SPECTROMETRY [LARGE SCALE ANALYSIS]</scope>
    <source>
        <tissue>Liver</tissue>
    </source>
</reference>
<reference key="6">
    <citation type="journal article" date="2009" name="Immunity">
        <title>The phagosomal proteome in interferon-gamma-activated macrophages.</title>
        <authorList>
            <person name="Trost M."/>
            <person name="English L."/>
            <person name="Lemieux S."/>
            <person name="Courcelles M."/>
            <person name="Desjardins M."/>
            <person name="Thibault P."/>
        </authorList>
    </citation>
    <scope>PHOSPHORYLATION [LARGE SCALE ANALYSIS] AT SER-268; SER-447; SER-452; THR-644; SER-645 AND SER-649</scope>
    <scope>IDENTIFICATION BY MASS SPECTROMETRY [LARGE SCALE ANALYSIS]</scope>
</reference>
<reference key="7">
    <citation type="journal article" date="2010" name="Cell">
        <title>A tissue-specific atlas of mouse protein phosphorylation and expression.</title>
        <authorList>
            <person name="Huttlin E.L."/>
            <person name="Jedrychowski M.P."/>
            <person name="Elias J.E."/>
            <person name="Goswami T."/>
            <person name="Rad R."/>
            <person name="Beausoleil S.A."/>
            <person name="Villen J."/>
            <person name="Haas W."/>
            <person name="Sowa M.E."/>
            <person name="Gygi S.P."/>
        </authorList>
    </citation>
    <scope>PHOSPHORYLATION [LARGE SCALE ANALYSIS] AT SER-268; SER-291; SER-292; SER-330; SER-344; SER-452; SER-642; SER-645 AND SER-649</scope>
    <scope>IDENTIFICATION BY MASS SPECTROMETRY [LARGE SCALE ANALYSIS]</scope>
    <source>
        <tissue>Brain</tissue>
        <tissue>Brown adipose tissue</tissue>
        <tissue>Kidney</tissue>
        <tissue>Liver</tissue>
        <tissue>Lung</tissue>
        <tissue>Spleen</tissue>
        <tissue>Testis</tissue>
    </source>
</reference>
<protein>
    <recommendedName>
        <fullName>Sorting nexin-29</fullName>
    </recommendedName>
</protein>
<organism>
    <name type="scientific">Mus musculus</name>
    <name type="common">Mouse</name>
    <dbReference type="NCBI Taxonomy" id="10090"/>
    <lineage>
        <taxon>Eukaryota</taxon>
        <taxon>Metazoa</taxon>
        <taxon>Chordata</taxon>
        <taxon>Craniata</taxon>
        <taxon>Vertebrata</taxon>
        <taxon>Euteleostomi</taxon>
        <taxon>Mammalia</taxon>
        <taxon>Eutheria</taxon>
        <taxon>Euarchontoglires</taxon>
        <taxon>Glires</taxon>
        <taxon>Rodentia</taxon>
        <taxon>Myomorpha</taxon>
        <taxon>Muroidea</taxon>
        <taxon>Muridae</taxon>
        <taxon>Murinae</taxon>
        <taxon>Mus</taxon>
        <taxon>Mus</taxon>
    </lineage>
</organism>
<sequence>MSGSQNDDRRQFLLERLLDAVKQCQIRFGGRKEIASDSDSRVTCLCAQFEAVLQHGMKRSRGLALTAAAIKQAAGFTSKTETEPVFWVYVKEVLNKHELQRFYSLHHITSDAGRGRAWLRCALNEHSLERYLHMLLADRARLSTFYEDWSFVMDEERSSMLPTMAAGLNSILFAINIDNKDLNGQSKFAPTVSDLLKESTQNVTSLLKESTQGMSSLLREITASSAVSILIKPEQETDPLPVISKNVHVDTRCKRERRRRKKVTNIVSFDDDEEEQGTGDTLKKMPGTAESSEENSDRSSVNIMAAFEGTFGPNSNGSQSSSSWKIDSASLNGELGYQKLDVKSIDDDVDENEEDAYRSPLGRGHTGHAESPDRTLDGNACLAQVHGWAPLQVLHGDADADTDVLFPVSGVGSYGAADAPVGSLENGTGTENHIIPEPGLRYREASSPGQGSPLSSLLPSASVPESMTVHELRQAIVAMMNRKDELEEENGSLRNLLDGEMEHSAALRQEVDALRRKVTEQQERHATKVQALARENEVLKVQLKKYVGAVQMLKREGQTAEAVPSLWNVDAEVTVPEQKPGEVAEELASSYERKLIEVAEMHGELIEFNERLHRALVAKEALVSQMRQELIDLRGPVPGDLSQTSEDQSLSDFEISNRALINVWIPSVFLRGKAANAFHVYQVYIRIKDDEWNVYRRYTEFRALHHQLQSAFPQVRAYSFPPKKAIGNKDAKFVEERRKQLQSYLRSVMNKVIQMVPEFAANPKKETLVQLVPFFVDITPPGEPLNKSSRPKAVSRFPKLSRGHPREVRNVEPQSGDL</sequence>
<accession>Q9D3S3</accession>
<accession>Q8K050</accession>
<name>SNX29_MOUSE</name>
<proteinExistence type="evidence at protein level"/>
<keyword id="KW-0025">Alternative splicing</keyword>
<keyword id="KW-0175">Coiled coil</keyword>
<keyword id="KW-0597">Phosphoprotein</keyword>
<keyword id="KW-1185">Reference proteome</keyword>
<dbReference type="EMBL" id="AF399755">
    <property type="protein sequence ID" value="AAK94018.1"/>
    <property type="molecule type" value="mRNA"/>
</dbReference>
<dbReference type="EMBL" id="AK017102">
    <property type="protein sequence ID" value="BAB30596.1"/>
    <property type="molecule type" value="mRNA"/>
</dbReference>
<dbReference type="EMBL" id="AC154233">
    <property type="status" value="NOT_ANNOTATED_CDS"/>
    <property type="molecule type" value="Genomic_DNA"/>
</dbReference>
<dbReference type="EMBL" id="AC154509">
    <property type="status" value="NOT_ANNOTATED_CDS"/>
    <property type="molecule type" value="Genomic_DNA"/>
</dbReference>
<dbReference type="EMBL" id="AC165252">
    <property type="status" value="NOT_ANNOTATED_CDS"/>
    <property type="molecule type" value="Genomic_DNA"/>
</dbReference>
<dbReference type="EMBL" id="AC167720">
    <property type="status" value="NOT_ANNOTATED_CDS"/>
    <property type="molecule type" value="Genomic_DNA"/>
</dbReference>
<dbReference type="EMBL" id="BC034114">
    <property type="protein sequence ID" value="AAH34114.1"/>
    <property type="status" value="ALT_SEQ"/>
    <property type="molecule type" value="mRNA"/>
</dbReference>
<dbReference type="CCDS" id="CCDS27963.2">
    <molecule id="Q9D3S3-1"/>
</dbReference>
<dbReference type="CCDS" id="CCDS79422.1">
    <molecule id="Q9D3S3-3"/>
</dbReference>
<dbReference type="RefSeq" id="NP_001277077.1">
    <molecule id="Q9D3S3-3"/>
    <property type="nucleotide sequence ID" value="NM_001290148.1"/>
</dbReference>
<dbReference type="RefSeq" id="NP_083240.2">
    <molecule id="Q9D3S3-1"/>
    <property type="nucleotide sequence ID" value="NM_028964.5"/>
</dbReference>
<dbReference type="SMR" id="Q9D3S3"/>
<dbReference type="FunCoup" id="Q9D3S3">
    <property type="interactions" value="1383"/>
</dbReference>
<dbReference type="IntAct" id="Q9D3S3">
    <property type="interactions" value="1"/>
</dbReference>
<dbReference type="MINT" id="Q9D3S3"/>
<dbReference type="STRING" id="10090.ENSMUSP00000138025"/>
<dbReference type="iPTMnet" id="Q9D3S3"/>
<dbReference type="PhosphoSitePlus" id="Q9D3S3"/>
<dbReference type="jPOST" id="Q9D3S3"/>
<dbReference type="PaxDb" id="10090-ENSMUSP00000093993"/>
<dbReference type="ProteomicsDB" id="261095">
    <molecule id="Q9D3S3-1"/>
</dbReference>
<dbReference type="ProteomicsDB" id="261096">
    <molecule id="Q9D3S3-3"/>
</dbReference>
<dbReference type="Antibodypedia" id="2225">
    <property type="antibodies" value="121 antibodies from 19 providers"/>
</dbReference>
<dbReference type="DNASU" id="74478"/>
<dbReference type="Ensembl" id="ENSMUST00000096273.9">
    <molecule id="Q9D3S3-3"/>
    <property type="protein sequence ID" value="ENSMUSP00000093993.3"/>
    <property type="gene ID" value="ENSMUSG00000071669.15"/>
</dbReference>
<dbReference type="Ensembl" id="ENSMUST00000180792.8">
    <molecule id="Q9D3S3-1"/>
    <property type="protein sequence ID" value="ENSMUSP00000138025.2"/>
    <property type="gene ID" value="ENSMUSG00000071669.15"/>
</dbReference>
<dbReference type="GeneID" id="74478"/>
<dbReference type="KEGG" id="mmu:74478"/>
<dbReference type="UCSC" id="uc007yfj.2">
    <molecule id="Q9D3S3-3"/>
    <property type="organism name" value="mouse"/>
</dbReference>
<dbReference type="UCSC" id="uc029swd.1">
    <molecule id="Q9D3S3-1"/>
    <property type="organism name" value="mouse"/>
</dbReference>
<dbReference type="AGR" id="MGI:1921728"/>
<dbReference type="CTD" id="92017"/>
<dbReference type="MGI" id="MGI:1921728">
    <property type="gene designation" value="Snx29"/>
</dbReference>
<dbReference type="VEuPathDB" id="HostDB:ENSMUSG00000071669"/>
<dbReference type="eggNOG" id="KOG2101">
    <property type="taxonomic scope" value="Eukaryota"/>
</dbReference>
<dbReference type="GeneTree" id="ENSGT00730000110975"/>
<dbReference type="HOGENOM" id="CLU_020563_1_0_1"/>
<dbReference type="InParanoid" id="Q9D3S3"/>
<dbReference type="OMA" id="TIPHVKL"/>
<dbReference type="OrthoDB" id="428895at2759"/>
<dbReference type="PhylomeDB" id="Q9D3S3"/>
<dbReference type="TreeFam" id="TF352146"/>
<dbReference type="BioGRID-ORCS" id="74478">
    <property type="hits" value="2 hits in 75 CRISPR screens"/>
</dbReference>
<dbReference type="ChiTaRS" id="Snx29">
    <property type="organism name" value="mouse"/>
</dbReference>
<dbReference type="PRO" id="PR:Q9D3S3"/>
<dbReference type="Proteomes" id="UP000000589">
    <property type="component" value="Chromosome 16"/>
</dbReference>
<dbReference type="RNAct" id="Q9D3S3">
    <property type="molecule type" value="protein"/>
</dbReference>
<dbReference type="Bgee" id="ENSMUSG00000071669">
    <property type="expression patterns" value="Expressed in rostral migratory stream and 187 other cell types or tissues"/>
</dbReference>
<dbReference type="ExpressionAtlas" id="Q9D3S3">
    <property type="expression patterns" value="baseline and differential"/>
</dbReference>
<dbReference type="GO" id="GO:0035091">
    <property type="term" value="F:phosphatidylinositol binding"/>
    <property type="evidence" value="ECO:0007669"/>
    <property type="project" value="InterPro"/>
</dbReference>
<dbReference type="CDD" id="cd07277">
    <property type="entry name" value="PX_RUN"/>
    <property type="match status" value="1"/>
</dbReference>
<dbReference type="CDD" id="cd17689">
    <property type="entry name" value="RUN_SNX29"/>
    <property type="match status" value="1"/>
</dbReference>
<dbReference type="Gene3D" id="1.20.58.900">
    <property type="match status" value="1"/>
</dbReference>
<dbReference type="Gene3D" id="3.30.1520.10">
    <property type="entry name" value="Phox-like domain"/>
    <property type="match status" value="1"/>
</dbReference>
<dbReference type="InterPro" id="IPR001683">
    <property type="entry name" value="PX_dom"/>
</dbReference>
<dbReference type="InterPro" id="IPR036871">
    <property type="entry name" value="PX_dom_sf"/>
</dbReference>
<dbReference type="InterPro" id="IPR004012">
    <property type="entry name" value="Run_dom"/>
</dbReference>
<dbReference type="InterPro" id="IPR037213">
    <property type="entry name" value="Run_dom_sf"/>
</dbReference>
<dbReference type="InterPro" id="IPR047329">
    <property type="entry name" value="RUN_SNX29"/>
</dbReference>
<dbReference type="InterPro" id="IPR037916">
    <property type="entry name" value="SNX29_PX"/>
</dbReference>
<dbReference type="PANTHER" id="PTHR47194:SF4">
    <property type="entry name" value="SORTING NEXIN-29"/>
    <property type="match status" value="1"/>
</dbReference>
<dbReference type="PANTHER" id="PTHR47194">
    <property type="entry name" value="SORTING NEXIN-29-RELATED"/>
    <property type="match status" value="1"/>
</dbReference>
<dbReference type="Pfam" id="PF00787">
    <property type="entry name" value="PX"/>
    <property type="match status" value="1"/>
</dbReference>
<dbReference type="Pfam" id="PF02759">
    <property type="entry name" value="RUN"/>
    <property type="match status" value="1"/>
</dbReference>
<dbReference type="SMART" id="SM00312">
    <property type="entry name" value="PX"/>
    <property type="match status" value="1"/>
</dbReference>
<dbReference type="SMART" id="SM00593">
    <property type="entry name" value="RUN"/>
    <property type="match status" value="1"/>
</dbReference>
<dbReference type="SUPFAM" id="SSF64268">
    <property type="entry name" value="PX domain"/>
    <property type="match status" value="1"/>
</dbReference>
<dbReference type="SUPFAM" id="SSF140741">
    <property type="entry name" value="RUN domain-like"/>
    <property type="match status" value="1"/>
</dbReference>
<dbReference type="PROSITE" id="PS50195">
    <property type="entry name" value="PX"/>
    <property type="match status" value="1"/>
</dbReference>
<dbReference type="PROSITE" id="PS50826">
    <property type="entry name" value="RUN"/>
    <property type="match status" value="1"/>
</dbReference>
<feature type="chain" id="PRO_0000297566" description="Sorting nexin-29">
    <location>
        <begin position="1"/>
        <end position="818"/>
    </location>
</feature>
<feature type="domain" description="RUN" evidence="3">
    <location>
        <begin position="36"/>
        <end position="180"/>
    </location>
</feature>
<feature type="domain" description="PX" evidence="2">
    <location>
        <begin position="659"/>
        <end position="782"/>
    </location>
</feature>
<feature type="region of interest" description="Disordered" evidence="4">
    <location>
        <begin position="267"/>
        <end position="299"/>
    </location>
</feature>
<feature type="region of interest" description="Disordered" evidence="4">
    <location>
        <begin position="343"/>
        <end position="375"/>
    </location>
</feature>
<feature type="region of interest" description="Disordered" evidence="4">
    <location>
        <begin position="441"/>
        <end position="462"/>
    </location>
</feature>
<feature type="region of interest" description="Disordered" evidence="4">
    <location>
        <begin position="781"/>
        <end position="818"/>
    </location>
</feature>
<feature type="coiled-coil region" evidence="1">
    <location>
        <begin position="467"/>
        <end position="547"/>
    </location>
</feature>
<feature type="compositionally biased region" description="Low complexity" evidence="4">
    <location>
        <begin position="445"/>
        <end position="462"/>
    </location>
</feature>
<feature type="modified residue" description="Phosphoserine" evidence="9 10">
    <location>
        <position position="268"/>
    </location>
</feature>
<feature type="modified residue" description="Phosphoserine" evidence="10">
    <location>
        <position position="291"/>
    </location>
</feature>
<feature type="modified residue" description="Phosphoserine" evidence="10">
    <location>
        <position position="292"/>
    </location>
</feature>
<feature type="modified residue" description="Phosphoserine" evidence="10">
    <location>
        <position position="330"/>
    </location>
</feature>
<feature type="modified residue" description="Phosphoserine" evidence="8 10">
    <location>
        <position position="344"/>
    </location>
</feature>
<feature type="modified residue" description="Phosphoserine" evidence="9">
    <location>
        <position position="447"/>
    </location>
</feature>
<feature type="modified residue" description="Phosphoserine" evidence="9 10">
    <location>
        <position position="452"/>
    </location>
</feature>
<feature type="modified residue" description="Phosphoserine" evidence="10">
    <location>
        <position position="642"/>
    </location>
</feature>
<feature type="modified residue" description="Phosphothreonine" evidence="9">
    <location>
        <position position="644"/>
    </location>
</feature>
<feature type="modified residue" description="Phosphoserine" evidence="9 10">
    <location>
        <position position="645"/>
    </location>
</feature>
<feature type="modified residue" description="Phosphoserine" evidence="9 10">
    <location>
        <position position="649"/>
    </location>
</feature>
<feature type="splice variant" id="VSP_041966" description="In isoform 2." evidence="5 6">
    <original>MSGSQNDDRRQFLLERLLDAVKQCQIRFGGRKEIASDSDSRVTCLCAQFEAVLQHGMKRSRGLALTAAAIKQAAGFTSKTETEPVFWVYVKEVLNKHELQRFYSLHHITSDAGRGRAWLRCALNEHSLERYLHMLLADRARLSTFYEDWSFVMDEERSSMLPTMAAGLNSILFAINIDNKDLNGQSKFAPTVSDLLKESTQNVTSLLKESTQGMSSLLREITASSAVSILIKPEQETDPLPVISKNVHVDTRCKRERRRRKKVTNIVSFDDDEEEQGTGDTLKKMPGTAESSEENSDRSSVNIMAAFEGTFGPNSNGSQSSSSWKIDSASLNGELGYQKLDVKSIDDDVDENEEDAYRSPLGRGHTGHAESPDR</original>
    <variation>MDSLCPVYSGIMIEESAEKPGQELSSDEWLTE</variation>
    <location>
        <begin position="1"/>
        <end position="374"/>
    </location>
</feature>
<evidence type="ECO:0000255" key="1"/>
<evidence type="ECO:0000255" key="2">
    <source>
        <dbReference type="PROSITE-ProRule" id="PRU00147"/>
    </source>
</evidence>
<evidence type="ECO:0000255" key="3">
    <source>
        <dbReference type="PROSITE-ProRule" id="PRU00178"/>
    </source>
</evidence>
<evidence type="ECO:0000256" key="4">
    <source>
        <dbReference type="SAM" id="MobiDB-lite"/>
    </source>
</evidence>
<evidence type="ECO:0000303" key="5">
    <source>
    </source>
</evidence>
<evidence type="ECO:0000303" key="6">
    <source ref="1"/>
</evidence>
<evidence type="ECO:0000305" key="7"/>
<evidence type="ECO:0007744" key="8">
    <source>
    </source>
</evidence>
<evidence type="ECO:0007744" key="9">
    <source>
    </source>
</evidence>
<evidence type="ECO:0007744" key="10">
    <source>
    </source>
</evidence>